<comment type="similarity">
    <text evidence="1">Belongs to the bacterial ribosomal protein bL32 family.</text>
</comment>
<feature type="chain" id="PRO_1000059821" description="Large ribosomal subunit protein bL32">
    <location>
        <begin position="1"/>
        <end position="59"/>
    </location>
</feature>
<dbReference type="EMBL" id="CP000705">
    <property type="protein sequence ID" value="ABQ83486.1"/>
    <property type="molecule type" value="Genomic_DNA"/>
</dbReference>
<dbReference type="RefSeq" id="WP_003664092.1">
    <property type="nucleotide sequence ID" value="NZ_AZDD01000001.1"/>
</dbReference>
<dbReference type="SMR" id="A5VKW2"/>
<dbReference type="STRING" id="557436.Lreu_1229"/>
<dbReference type="GeneID" id="77191899"/>
<dbReference type="KEGG" id="lre:Lreu_1229"/>
<dbReference type="PATRIC" id="fig|557436.17.peg.97"/>
<dbReference type="eggNOG" id="COG0333">
    <property type="taxonomic scope" value="Bacteria"/>
</dbReference>
<dbReference type="HOGENOM" id="CLU_129084_1_3_9"/>
<dbReference type="Proteomes" id="UP000001991">
    <property type="component" value="Chromosome"/>
</dbReference>
<dbReference type="GO" id="GO:0015934">
    <property type="term" value="C:large ribosomal subunit"/>
    <property type="evidence" value="ECO:0007669"/>
    <property type="project" value="InterPro"/>
</dbReference>
<dbReference type="GO" id="GO:0003735">
    <property type="term" value="F:structural constituent of ribosome"/>
    <property type="evidence" value="ECO:0007669"/>
    <property type="project" value="InterPro"/>
</dbReference>
<dbReference type="GO" id="GO:0006412">
    <property type="term" value="P:translation"/>
    <property type="evidence" value="ECO:0007669"/>
    <property type="project" value="UniProtKB-UniRule"/>
</dbReference>
<dbReference type="HAMAP" id="MF_00340">
    <property type="entry name" value="Ribosomal_bL32"/>
    <property type="match status" value="1"/>
</dbReference>
<dbReference type="InterPro" id="IPR002677">
    <property type="entry name" value="Ribosomal_bL32"/>
</dbReference>
<dbReference type="InterPro" id="IPR044957">
    <property type="entry name" value="Ribosomal_bL32_bact"/>
</dbReference>
<dbReference type="InterPro" id="IPR011332">
    <property type="entry name" value="Ribosomal_zn-bd"/>
</dbReference>
<dbReference type="NCBIfam" id="TIGR01031">
    <property type="entry name" value="rpmF_bact"/>
    <property type="match status" value="1"/>
</dbReference>
<dbReference type="PANTHER" id="PTHR35534">
    <property type="entry name" value="50S RIBOSOMAL PROTEIN L32"/>
    <property type="match status" value="1"/>
</dbReference>
<dbReference type="PANTHER" id="PTHR35534:SF1">
    <property type="entry name" value="LARGE RIBOSOMAL SUBUNIT PROTEIN BL32"/>
    <property type="match status" value="1"/>
</dbReference>
<dbReference type="Pfam" id="PF01783">
    <property type="entry name" value="Ribosomal_L32p"/>
    <property type="match status" value="1"/>
</dbReference>
<dbReference type="SUPFAM" id="SSF57829">
    <property type="entry name" value="Zn-binding ribosomal proteins"/>
    <property type="match status" value="1"/>
</dbReference>
<proteinExistence type="inferred from homology"/>
<protein>
    <recommendedName>
        <fullName evidence="1">Large ribosomal subunit protein bL32</fullName>
    </recommendedName>
    <alternativeName>
        <fullName evidence="2">50S ribosomal protein L32</fullName>
    </alternativeName>
</protein>
<gene>
    <name evidence="1" type="primary">rpmF</name>
    <name type="ordered locus">Lreu_1229</name>
</gene>
<reference key="1">
    <citation type="journal article" date="2011" name="PLoS Genet.">
        <title>The evolution of host specialization in the vertebrate gut symbiont Lactobacillus reuteri.</title>
        <authorList>
            <person name="Frese S.A."/>
            <person name="Benson A.K."/>
            <person name="Tannock G.W."/>
            <person name="Loach D.M."/>
            <person name="Kim J."/>
            <person name="Zhang M."/>
            <person name="Oh P.L."/>
            <person name="Heng N.C."/>
            <person name="Patil P.B."/>
            <person name="Juge N."/>
            <person name="Mackenzie D.A."/>
            <person name="Pearson B.M."/>
            <person name="Lapidus A."/>
            <person name="Dalin E."/>
            <person name="Tice H."/>
            <person name="Goltsman E."/>
            <person name="Land M."/>
            <person name="Hauser L."/>
            <person name="Ivanova N."/>
            <person name="Kyrpides N.C."/>
            <person name="Walter J."/>
        </authorList>
    </citation>
    <scope>NUCLEOTIDE SEQUENCE [LARGE SCALE GENOMIC DNA]</scope>
    <source>
        <strain>DSM 20016</strain>
    </source>
</reference>
<organism>
    <name type="scientific">Limosilactobacillus reuteri (strain DSM 20016)</name>
    <name type="common">Lactobacillus reuteri</name>
    <dbReference type="NCBI Taxonomy" id="557436"/>
    <lineage>
        <taxon>Bacteria</taxon>
        <taxon>Bacillati</taxon>
        <taxon>Bacillota</taxon>
        <taxon>Bacilli</taxon>
        <taxon>Lactobacillales</taxon>
        <taxon>Lactobacillaceae</taxon>
        <taxon>Limosilactobacillus</taxon>
    </lineage>
</organism>
<keyword id="KW-1185">Reference proteome</keyword>
<keyword id="KW-0687">Ribonucleoprotein</keyword>
<keyword id="KW-0689">Ribosomal protein</keyword>
<name>RL32_LIMRD</name>
<sequence>MAVPARKTSKTKKRMRRGHIKLNVPGLTPCPNCGELRKSHMVCPSCGYYDGKQVVNTNN</sequence>
<evidence type="ECO:0000255" key="1">
    <source>
        <dbReference type="HAMAP-Rule" id="MF_00340"/>
    </source>
</evidence>
<evidence type="ECO:0000305" key="2"/>
<accession>A5VKW2</accession>